<sequence>MDNQIIQETVDKILSVLPNQAGQLARLVRLMQFACDPTITVIGKYNHGKSRLLNELIGTDIFSVADKRETIQLAEHKQDQVRWLDAPGLDADVAAVDDRHAFEAVWTQADIRLFVHSVREGELDATEHHLLQQLIEDADHSRRQTILVLTQIDQIPDQTILTQIKTSIAQQVPKLDIWAVSATRHRQGIENGKTLLIEKSGIGALRHTLEQALAQVPSARTYEKNRLLSDLHHQLKQLLLDQKHVLQQLQQTQQQQLHDFDTGLINILDKIRVDLEPIVNIDGQDQALNPDSFATMFKNTAAKQQRAKVQIAYSRACIEINSHLIRHGVVGLPAEQQTTIKSIDTVIVAVFGISVKFRDQLRALFYTDTERQRLQREFRFYFEKSAGRMILAAKIEQTMRQQGCIQNAMMALQQMESAA</sequence>
<proteinExistence type="predicted"/>
<name>Y1443_ACIAD</name>
<feature type="chain" id="PRO_0000066069" description="Uncharacterized protein ACIAD1443">
    <location>
        <begin position="1"/>
        <end position="419"/>
    </location>
</feature>
<protein>
    <recommendedName>
        <fullName>Uncharacterized protein ACIAD1443</fullName>
    </recommendedName>
    <alternativeName>
        <fullName>ORF1</fullName>
    </alternativeName>
</protein>
<gene>
    <name type="ordered locus">ACIAD1443</name>
</gene>
<accession>P07776</accession>
<accession>Q6FCA5</accession>
<evidence type="ECO:0000305" key="1"/>
<organism>
    <name type="scientific">Acinetobacter baylyi (strain ATCC 33305 / BD413 / ADP1)</name>
    <dbReference type="NCBI Taxonomy" id="62977"/>
    <lineage>
        <taxon>Bacteria</taxon>
        <taxon>Pseudomonadati</taxon>
        <taxon>Pseudomonadota</taxon>
        <taxon>Gammaproteobacteria</taxon>
        <taxon>Moraxellales</taxon>
        <taxon>Moraxellaceae</taxon>
        <taxon>Acinetobacter</taxon>
    </lineage>
</organism>
<dbReference type="EMBL" id="AF009224">
    <property type="protein sequence ID" value="AAC46427.1"/>
    <property type="molecule type" value="Genomic_DNA"/>
</dbReference>
<dbReference type="EMBL" id="CR543861">
    <property type="protein sequence ID" value="CAG68306.1"/>
    <property type="status" value="ALT_INIT"/>
    <property type="molecule type" value="Genomic_DNA"/>
</dbReference>
<dbReference type="STRING" id="202950.GCA_001485005_01197"/>
<dbReference type="KEGG" id="aci:ACIAD1443"/>
<dbReference type="eggNOG" id="COG1159">
    <property type="taxonomic scope" value="Bacteria"/>
</dbReference>
<dbReference type="HOGENOM" id="CLU_654940_0_0_6"/>
<dbReference type="Proteomes" id="UP000000430">
    <property type="component" value="Chromosome"/>
</dbReference>
<dbReference type="GO" id="GO:0005737">
    <property type="term" value="C:cytoplasm"/>
    <property type="evidence" value="ECO:0007669"/>
    <property type="project" value="TreeGrafter"/>
</dbReference>
<dbReference type="GO" id="GO:0005525">
    <property type="term" value="F:GTP binding"/>
    <property type="evidence" value="ECO:0007669"/>
    <property type="project" value="InterPro"/>
</dbReference>
<dbReference type="GO" id="GO:0009056">
    <property type="term" value="P:catabolic process"/>
    <property type="evidence" value="ECO:0007669"/>
    <property type="project" value="UniProtKB-KW"/>
</dbReference>
<dbReference type="GO" id="GO:0030488">
    <property type="term" value="P:tRNA methylation"/>
    <property type="evidence" value="ECO:0007669"/>
    <property type="project" value="TreeGrafter"/>
</dbReference>
<dbReference type="GO" id="GO:0002098">
    <property type="term" value="P:tRNA wobble uridine modification"/>
    <property type="evidence" value="ECO:0007669"/>
    <property type="project" value="TreeGrafter"/>
</dbReference>
<dbReference type="Gene3D" id="3.40.50.300">
    <property type="entry name" value="P-loop containing nucleotide triphosphate hydrolases"/>
    <property type="match status" value="1"/>
</dbReference>
<dbReference type="InterPro" id="IPR006073">
    <property type="entry name" value="GTP-bd"/>
</dbReference>
<dbReference type="InterPro" id="IPR027417">
    <property type="entry name" value="P-loop_NTPase"/>
</dbReference>
<dbReference type="PANTHER" id="PTHR42714:SF6">
    <property type="entry name" value="TRANSLATION INITIATION FACTOR IF-2"/>
    <property type="match status" value="1"/>
</dbReference>
<dbReference type="PANTHER" id="PTHR42714">
    <property type="entry name" value="TRNA MODIFICATION GTPASE GTPBP3"/>
    <property type="match status" value="1"/>
</dbReference>
<dbReference type="Pfam" id="PF01926">
    <property type="entry name" value="MMR_HSR1"/>
    <property type="match status" value="1"/>
</dbReference>
<dbReference type="SUPFAM" id="SSF52540">
    <property type="entry name" value="P-loop containing nucleoside triphosphate hydrolases"/>
    <property type="match status" value="1"/>
</dbReference>
<keyword id="KW-0058">Aromatic hydrocarbons catabolism</keyword>
<reference key="1">
    <citation type="journal article" date="1991" name="J. Bacteriol.">
        <title>Nucleotide sequences of the Acinetobacter calcoaceticus benABC genes for benzoate 1,2-dioxygenase reveal evolutionary relationships among multicomponent oxygenases.</title>
        <authorList>
            <person name="Neidle E.L."/>
            <person name="Hartnett C."/>
            <person name="Ornston N.L."/>
            <person name="Bairoch A."/>
            <person name="Rekik M."/>
            <person name="Harayama S."/>
        </authorList>
    </citation>
    <scope>NUCLEOTIDE SEQUENCE [GENOMIC DNA]</scope>
</reference>
<reference key="2">
    <citation type="journal article" date="2004" name="Nucleic Acids Res.">
        <title>Unique features revealed by the genome sequence of Acinetobacter sp. ADP1, a versatile and naturally transformation competent bacterium.</title>
        <authorList>
            <person name="Barbe V."/>
            <person name="Vallenet D."/>
            <person name="Fonknechten N."/>
            <person name="Kreimeyer A."/>
            <person name="Oztas S."/>
            <person name="Labarre L."/>
            <person name="Cruveiller S."/>
            <person name="Robert C."/>
            <person name="Duprat S."/>
            <person name="Wincker P."/>
            <person name="Ornston L.N."/>
            <person name="Weissenbach J."/>
            <person name="Marliere P."/>
            <person name="Cohen G.N."/>
            <person name="Medigue C."/>
        </authorList>
    </citation>
    <scope>NUCLEOTIDE SEQUENCE [LARGE SCALE GENOMIC DNA]</scope>
    <source>
        <strain>ATCC 33305 / BD413 / ADP1</strain>
    </source>
</reference>
<comment type="sequence caution" evidence="1">
    <conflict type="erroneous initiation">
        <sequence resource="EMBL-CDS" id="CAG68306"/>
    </conflict>
</comment>